<comment type="function">
    <text evidence="1">Specifically methylates the N4 position of cytidine in position 1402 (C1402) of 16S rRNA.</text>
</comment>
<comment type="catalytic activity">
    <reaction evidence="1">
        <text>cytidine(1402) in 16S rRNA + S-adenosyl-L-methionine = N(4)-methylcytidine(1402) in 16S rRNA + S-adenosyl-L-homocysteine + H(+)</text>
        <dbReference type="Rhea" id="RHEA:42928"/>
        <dbReference type="Rhea" id="RHEA-COMP:10286"/>
        <dbReference type="Rhea" id="RHEA-COMP:10287"/>
        <dbReference type="ChEBI" id="CHEBI:15378"/>
        <dbReference type="ChEBI" id="CHEBI:57856"/>
        <dbReference type="ChEBI" id="CHEBI:59789"/>
        <dbReference type="ChEBI" id="CHEBI:74506"/>
        <dbReference type="ChEBI" id="CHEBI:82748"/>
        <dbReference type="EC" id="2.1.1.199"/>
    </reaction>
</comment>
<comment type="subcellular location">
    <subcellularLocation>
        <location evidence="1">Cytoplasm</location>
    </subcellularLocation>
</comment>
<comment type="similarity">
    <text evidence="1">Belongs to the methyltransferase superfamily. RsmH family.</text>
</comment>
<protein>
    <recommendedName>
        <fullName evidence="1">Ribosomal RNA small subunit methyltransferase H</fullName>
        <ecNumber evidence="1">2.1.1.199</ecNumber>
    </recommendedName>
    <alternativeName>
        <fullName evidence="1">16S rRNA m(4)C1402 methyltransferase</fullName>
    </alternativeName>
    <alternativeName>
        <fullName evidence="1">rRNA (cytosine-N(4)-)-methyltransferase RsmH</fullName>
    </alternativeName>
</protein>
<gene>
    <name evidence="1" type="primary">rsmH</name>
    <name type="synonym">mraW</name>
    <name type="ordered locus">NTHI1297</name>
</gene>
<accession>Q4QLG6</accession>
<name>RSMH_HAEI8</name>
<evidence type="ECO:0000255" key="1">
    <source>
        <dbReference type="HAMAP-Rule" id="MF_01007"/>
    </source>
</evidence>
<proteinExistence type="inferred from homology"/>
<reference key="1">
    <citation type="journal article" date="2005" name="J. Bacteriol.">
        <title>Genomic sequence of an otitis media isolate of nontypeable Haemophilus influenzae: comparative study with H. influenzae serotype d, strain KW20.</title>
        <authorList>
            <person name="Harrison A."/>
            <person name="Dyer D.W."/>
            <person name="Gillaspy A."/>
            <person name="Ray W.C."/>
            <person name="Mungur R."/>
            <person name="Carson M.B."/>
            <person name="Zhong H."/>
            <person name="Gipson J."/>
            <person name="Gipson M."/>
            <person name="Johnson L.S."/>
            <person name="Lewis L."/>
            <person name="Bakaletz L.O."/>
            <person name="Munson R.S. Jr."/>
        </authorList>
    </citation>
    <scope>NUCLEOTIDE SEQUENCE [LARGE SCALE GENOMIC DNA]</scope>
    <source>
        <strain>86-028NP</strain>
    </source>
</reference>
<dbReference type="EC" id="2.1.1.199" evidence="1"/>
<dbReference type="EMBL" id="CP000057">
    <property type="protein sequence ID" value="AAX88131.1"/>
    <property type="molecule type" value="Genomic_DNA"/>
</dbReference>
<dbReference type="RefSeq" id="WP_005686428.1">
    <property type="nucleotide sequence ID" value="NC_007146.2"/>
</dbReference>
<dbReference type="SMR" id="Q4QLG6"/>
<dbReference type="KEGG" id="hit:NTHI1297"/>
<dbReference type="HOGENOM" id="CLU_038422_2_0_6"/>
<dbReference type="Proteomes" id="UP000002525">
    <property type="component" value="Chromosome"/>
</dbReference>
<dbReference type="GO" id="GO:0005737">
    <property type="term" value="C:cytoplasm"/>
    <property type="evidence" value="ECO:0007669"/>
    <property type="project" value="UniProtKB-SubCell"/>
</dbReference>
<dbReference type="GO" id="GO:0071424">
    <property type="term" value="F:rRNA (cytosine-N4-)-methyltransferase activity"/>
    <property type="evidence" value="ECO:0007669"/>
    <property type="project" value="UniProtKB-UniRule"/>
</dbReference>
<dbReference type="GO" id="GO:0070475">
    <property type="term" value="P:rRNA base methylation"/>
    <property type="evidence" value="ECO:0007669"/>
    <property type="project" value="UniProtKB-UniRule"/>
</dbReference>
<dbReference type="FunFam" id="1.10.150.170:FF:000001">
    <property type="entry name" value="Ribosomal RNA small subunit methyltransferase H"/>
    <property type="match status" value="1"/>
</dbReference>
<dbReference type="Gene3D" id="1.10.150.170">
    <property type="entry name" value="Putative methyltransferase TM0872, insert domain"/>
    <property type="match status" value="1"/>
</dbReference>
<dbReference type="Gene3D" id="3.40.50.150">
    <property type="entry name" value="Vaccinia Virus protein VP39"/>
    <property type="match status" value="1"/>
</dbReference>
<dbReference type="HAMAP" id="MF_01007">
    <property type="entry name" value="16SrRNA_methyltr_H"/>
    <property type="match status" value="1"/>
</dbReference>
<dbReference type="InterPro" id="IPR002903">
    <property type="entry name" value="RsmH"/>
</dbReference>
<dbReference type="InterPro" id="IPR023397">
    <property type="entry name" value="SAM-dep_MeTrfase_MraW_recog"/>
</dbReference>
<dbReference type="InterPro" id="IPR029063">
    <property type="entry name" value="SAM-dependent_MTases_sf"/>
</dbReference>
<dbReference type="NCBIfam" id="TIGR00006">
    <property type="entry name" value="16S rRNA (cytosine(1402)-N(4))-methyltransferase RsmH"/>
    <property type="match status" value="1"/>
</dbReference>
<dbReference type="PANTHER" id="PTHR11265:SF0">
    <property type="entry name" value="12S RRNA N4-METHYLCYTIDINE METHYLTRANSFERASE"/>
    <property type="match status" value="1"/>
</dbReference>
<dbReference type="PANTHER" id="PTHR11265">
    <property type="entry name" value="S-ADENOSYL-METHYLTRANSFERASE MRAW"/>
    <property type="match status" value="1"/>
</dbReference>
<dbReference type="Pfam" id="PF01795">
    <property type="entry name" value="Methyltransf_5"/>
    <property type="match status" value="1"/>
</dbReference>
<dbReference type="PIRSF" id="PIRSF004486">
    <property type="entry name" value="MraW"/>
    <property type="match status" value="1"/>
</dbReference>
<dbReference type="SUPFAM" id="SSF81799">
    <property type="entry name" value="Putative methyltransferase TM0872, insert domain"/>
    <property type="match status" value="1"/>
</dbReference>
<dbReference type="SUPFAM" id="SSF53335">
    <property type="entry name" value="S-adenosyl-L-methionine-dependent methyltransferases"/>
    <property type="match status" value="1"/>
</dbReference>
<organism>
    <name type="scientific">Haemophilus influenzae (strain 86-028NP)</name>
    <dbReference type="NCBI Taxonomy" id="281310"/>
    <lineage>
        <taxon>Bacteria</taxon>
        <taxon>Pseudomonadati</taxon>
        <taxon>Pseudomonadota</taxon>
        <taxon>Gammaproteobacteria</taxon>
        <taxon>Pasteurellales</taxon>
        <taxon>Pasteurellaceae</taxon>
        <taxon>Haemophilus</taxon>
    </lineage>
</organism>
<feature type="chain" id="PRO_0000223544" description="Ribosomal RNA small subunit methyltransferase H">
    <location>
        <begin position="1"/>
        <end position="321"/>
    </location>
</feature>
<feature type="binding site" evidence="1">
    <location>
        <begin position="40"/>
        <end position="42"/>
    </location>
    <ligand>
        <name>S-adenosyl-L-methionine</name>
        <dbReference type="ChEBI" id="CHEBI:59789"/>
    </ligand>
</feature>
<feature type="binding site" evidence="1">
    <location>
        <position position="60"/>
    </location>
    <ligand>
        <name>S-adenosyl-L-methionine</name>
        <dbReference type="ChEBI" id="CHEBI:59789"/>
    </ligand>
</feature>
<feature type="binding site" evidence="1">
    <location>
        <position position="84"/>
    </location>
    <ligand>
        <name>S-adenosyl-L-methionine</name>
        <dbReference type="ChEBI" id="CHEBI:59789"/>
    </ligand>
</feature>
<feature type="binding site" evidence="1">
    <location>
        <position position="106"/>
    </location>
    <ligand>
        <name>S-adenosyl-L-methionine</name>
        <dbReference type="ChEBI" id="CHEBI:59789"/>
    </ligand>
</feature>
<feature type="binding site" evidence="1">
    <location>
        <position position="113"/>
    </location>
    <ligand>
        <name>S-adenosyl-L-methionine</name>
        <dbReference type="ChEBI" id="CHEBI:59789"/>
    </ligand>
</feature>
<keyword id="KW-0963">Cytoplasm</keyword>
<keyword id="KW-0489">Methyltransferase</keyword>
<keyword id="KW-0698">rRNA processing</keyword>
<keyword id="KW-0949">S-adenosyl-L-methionine</keyword>
<keyword id="KW-0808">Transferase</keyword>
<sequence>MNSENSFSSSEHITVLLHEAVNGLALKENGIYIDGTFGRGGHSRFILSQLSSNGRLIAVDRDPRAIAEAHKIQDLRFQIEHNSFSHIPEICDKLNLVGKIDGILLDLGVSSPQLDEAERGFSFMKDGPLDMRMDTTQGLSAEEWLKQVSIEDLTWVLKTFGEERFAKRIATAIVDFNKSAVKNSTEFLSRTSQLAELISQAVPFKDKHKHPATRSFQAIRIFINSELDELESLLNSALDMLAPEGRLSIISFHSLEDRMVKHFMKKQSKGEDIPKGLPLREDQIQRNQKLRIIGKAIQPSDAEIQANPRSRSAILRVAERI</sequence>